<sequence>MKPLAYYEDQLLKDEKSFLKVTEIERLLSYAAYLLPAEFRDDQLKSQTITSILLLLHQFHTGLLFRKIAELPKTEQAILKSERTQYLEYFRKKNPSFEKVSELLYFLNISTFPIELVISKYNPSRQYDSVLFLESVKFLLRVHIMWTTGGDLPLSNPVLQRDFNVKTFIHLHKKYSNSGSAVVLKNSKKVVPRLNTVNSSLDFLQNRTPRLSSILPDEIFTKRLPNLRIFSNFIKVCRPLIYMLFMWHWKRKQKSSSLKVRPWGPWIVAFVFEVISQLIDRRCESATSSRQGFGLERRTNQSQFQHFVVWAFTQGRFYDEFTKHWINRSLSWVNSIPVFGKYLLLSVEERQKSLENYISSVRNY</sequence>
<keyword id="KW-0472">Membrane</keyword>
<keyword id="KW-0576">Peroxisome</keyword>
<keyword id="KW-0962">Peroxisome biogenesis</keyword>
<keyword id="KW-0597">Phosphoprotein</keyword>
<keyword id="KW-1185">Reference proteome</keyword>
<protein>
    <recommendedName>
        <fullName>Peroxisomal membrane protein PEX16</fullName>
        <shortName>Peroxin-16</shortName>
    </recommendedName>
</protein>
<feature type="chain" id="PRO_0000374020" description="Peroxisomal membrane protein PEX16">
    <location>
        <begin position="1"/>
        <end position="364"/>
    </location>
</feature>
<feature type="modified residue" description="Phosphoserine" evidence="2">
    <location>
        <position position="200"/>
    </location>
</feature>
<evidence type="ECO:0000250" key="1"/>
<evidence type="ECO:0000269" key="2">
    <source>
    </source>
</evidence>
<evidence type="ECO:0000305" key="3"/>
<dbReference type="EMBL" id="CU329671">
    <property type="protein sequence ID" value="CAA22819.2"/>
    <property type="molecule type" value="Genomic_DNA"/>
</dbReference>
<dbReference type="PIR" id="T40591">
    <property type="entry name" value="T40591"/>
</dbReference>
<dbReference type="RefSeq" id="NP_595373.2">
    <property type="nucleotide sequence ID" value="NM_001021281.2"/>
</dbReference>
<dbReference type="BioGRID" id="277578">
    <property type="interactions" value="1"/>
</dbReference>
<dbReference type="FunCoup" id="O94516">
    <property type="interactions" value="25"/>
</dbReference>
<dbReference type="STRING" id="284812.O94516"/>
<dbReference type="iPTMnet" id="O94516"/>
<dbReference type="PaxDb" id="4896-SPBC646.15c.1"/>
<dbReference type="EnsemblFungi" id="SPBC646.15c.1">
    <property type="protein sequence ID" value="SPBC646.15c.1:pep"/>
    <property type="gene ID" value="SPBC646.15c"/>
</dbReference>
<dbReference type="GeneID" id="2541063"/>
<dbReference type="KEGG" id="spo:2541063"/>
<dbReference type="PomBase" id="SPBC646.15c">
    <property type="gene designation" value="pex16"/>
</dbReference>
<dbReference type="VEuPathDB" id="FungiDB:SPBC646.15c"/>
<dbReference type="eggNOG" id="KOG4546">
    <property type="taxonomic scope" value="Eukaryota"/>
</dbReference>
<dbReference type="HOGENOM" id="CLU_761077_0_0_1"/>
<dbReference type="InParanoid" id="O94516"/>
<dbReference type="OMA" id="PTWQSTY"/>
<dbReference type="Reactome" id="R-SPO-9603798">
    <property type="pathway name" value="Class I peroxisomal membrane protein import"/>
</dbReference>
<dbReference type="PRO" id="PR:O94516"/>
<dbReference type="Proteomes" id="UP000002485">
    <property type="component" value="Chromosome II"/>
</dbReference>
<dbReference type="GO" id="GO:0005778">
    <property type="term" value="C:peroxisomal membrane"/>
    <property type="evidence" value="ECO:0000318"/>
    <property type="project" value="GO_Central"/>
</dbReference>
<dbReference type="GO" id="GO:0007031">
    <property type="term" value="P:peroxisome organization"/>
    <property type="evidence" value="ECO:0000318"/>
    <property type="project" value="GO_Central"/>
</dbReference>
<dbReference type="GO" id="GO:0016558">
    <property type="term" value="P:protein import into peroxisome matrix"/>
    <property type="evidence" value="ECO:0000250"/>
    <property type="project" value="PomBase"/>
</dbReference>
<dbReference type="GO" id="GO:0045046">
    <property type="term" value="P:protein import into peroxisome membrane"/>
    <property type="evidence" value="ECO:0000250"/>
    <property type="project" value="PomBase"/>
</dbReference>
<dbReference type="InterPro" id="IPR013919">
    <property type="entry name" value="Pex16"/>
</dbReference>
<dbReference type="PANTHER" id="PTHR13299">
    <property type="entry name" value="PEROXISOMAL MEMBRANE PROTEIN PEX16"/>
    <property type="match status" value="1"/>
</dbReference>
<dbReference type="PANTHER" id="PTHR13299:SF0">
    <property type="entry name" value="PEROXISOMAL MEMBRANE PROTEIN PEX16"/>
    <property type="match status" value="1"/>
</dbReference>
<dbReference type="Pfam" id="PF08610">
    <property type="entry name" value="Pex16"/>
    <property type="match status" value="1"/>
</dbReference>
<accession>O94516</accession>
<gene>
    <name type="primary">pex16</name>
    <name type="ORF">SPBC646.15c</name>
</gene>
<proteinExistence type="evidence at protein level"/>
<reference key="1">
    <citation type="journal article" date="2002" name="Nature">
        <title>The genome sequence of Schizosaccharomyces pombe.</title>
        <authorList>
            <person name="Wood V."/>
            <person name="Gwilliam R."/>
            <person name="Rajandream M.A."/>
            <person name="Lyne M.H."/>
            <person name="Lyne R."/>
            <person name="Stewart A."/>
            <person name="Sgouros J.G."/>
            <person name="Peat N."/>
            <person name="Hayles J."/>
            <person name="Baker S.G."/>
            <person name="Basham D."/>
            <person name="Bowman S."/>
            <person name="Brooks K."/>
            <person name="Brown D."/>
            <person name="Brown S."/>
            <person name="Chillingworth T."/>
            <person name="Churcher C.M."/>
            <person name="Collins M."/>
            <person name="Connor R."/>
            <person name="Cronin A."/>
            <person name="Davis P."/>
            <person name="Feltwell T."/>
            <person name="Fraser A."/>
            <person name="Gentles S."/>
            <person name="Goble A."/>
            <person name="Hamlin N."/>
            <person name="Harris D.E."/>
            <person name="Hidalgo J."/>
            <person name="Hodgson G."/>
            <person name="Holroyd S."/>
            <person name="Hornsby T."/>
            <person name="Howarth S."/>
            <person name="Huckle E.J."/>
            <person name="Hunt S."/>
            <person name="Jagels K."/>
            <person name="James K.D."/>
            <person name="Jones L."/>
            <person name="Jones M."/>
            <person name="Leather S."/>
            <person name="McDonald S."/>
            <person name="McLean J."/>
            <person name="Mooney P."/>
            <person name="Moule S."/>
            <person name="Mungall K.L."/>
            <person name="Murphy L.D."/>
            <person name="Niblett D."/>
            <person name="Odell C."/>
            <person name="Oliver K."/>
            <person name="O'Neil S."/>
            <person name="Pearson D."/>
            <person name="Quail M.A."/>
            <person name="Rabbinowitsch E."/>
            <person name="Rutherford K.M."/>
            <person name="Rutter S."/>
            <person name="Saunders D."/>
            <person name="Seeger K."/>
            <person name="Sharp S."/>
            <person name="Skelton J."/>
            <person name="Simmonds M.N."/>
            <person name="Squares R."/>
            <person name="Squares S."/>
            <person name="Stevens K."/>
            <person name="Taylor K."/>
            <person name="Taylor R.G."/>
            <person name="Tivey A."/>
            <person name="Walsh S.V."/>
            <person name="Warren T."/>
            <person name="Whitehead S."/>
            <person name="Woodward J.R."/>
            <person name="Volckaert G."/>
            <person name="Aert R."/>
            <person name="Robben J."/>
            <person name="Grymonprez B."/>
            <person name="Weltjens I."/>
            <person name="Vanstreels E."/>
            <person name="Rieger M."/>
            <person name="Schaefer M."/>
            <person name="Mueller-Auer S."/>
            <person name="Gabel C."/>
            <person name="Fuchs M."/>
            <person name="Duesterhoeft A."/>
            <person name="Fritzc C."/>
            <person name="Holzer E."/>
            <person name="Moestl D."/>
            <person name="Hilbert H."/>
            <person name="Borzym K."/>
            <person name="Langer I."/>
            <person name="Beck A."/>
            <person name="Lehrach H."/>
            <person name="Reinhardt R."/>
            <person name="Pohl T.M."/>
            <person name="Eger P."/>
            <person name="Zimmermann W."/>
            <person name="Wedler H."/>
            <person name="Wambutt R."/>
            <person name="Purnelle B."/>
            <person name="Goffeau A."/>
            <person name="Cadieu E."/>
            <person name="Dreano S."/>
            <person name="Gloux S."/>
            <person name="Lelaure V."/>
            <person name="Mottier S."/>
            <person name="Galibert F."/>
            <person name="Aves S.J."/>
            <person name="Xiang Z."/>
            <person name="Hunt C."/>
            <person name="Moore K."/>
            <person name="Hurst S.M."/>
            <person name="Lucas M."/>
            <person name="Rochet M."/>
            <person name="Gaillardin C."/>
            <person name="Tallada V.A."/>
            <person name="Garzon A."/>
            <person name="Thode G."/>
            <person name="Daga R.R."/>
            <person name="Cruzado L."/>
            <person name="Jimenez J."/>
            <person name="Sanchez M."/>
            <person name="del Rey F."/>
            <person name="Benito J."/>
            <person name="Dominguez A."/>
            <person name="Revuelta J.L."/>
            <person name="Moreno S."/>
            <person name="Armstrong J."/>
            <person name="Forsburg S.L."/>
            <person name="Cerutti L."/>
            <person name="Lowe T."/>
            <person name="McCombie W.R."/>
            <person name="Paulsen I."/>
            <person name="Potashkin J."/>
            <person name="Shpakovski G.V."/>
            <person name="Ussery D."/>
            <person name="Barrell B.G."/>
            <person name="Nurse P."/>
        </authorList>
    </citation>
    <scope>NUCLEOTIDE SEQUENCE [LARGE SCALE GENOMIC DNA]</scope>
    <source>
        <strain>972 / ATCC 24843</strain>
    </source>
</reference>
<reference key="2">
    <citation type="journal article" date="2011" name="Science">
        <title>Comparative functional genomics of the fission yeasts.</title>
        <authorList>
            <person name="Rhind N."/>
            <person name="Chen Z."/>
            <person name="Yassour M."/>
            <person name="Thompson D.A."/>
            <person name="Haas B.J."/>
            <person name="Habib N."/>
            <person name="Wapinski I."/>
            <person name="Roy S."/>
            <person name="Lin M.F."/>
            <person name="Heiman D.I."/>
            <person name="Young S.K."/>
            <person name="Furuya K."/>
            <person name="Guo Y."/>
            <person name="Pidoux A."/>
            <person name="Chen H.M."/>
            <person name="Robbertse B."/>
            <person name="Goldberg J.M."/>
            <person name="Aoki K."/>
            <person name="Bayne E.H."/>
            <person name="Berlin A.M."/>
            <person name="Desjardins C.A."/>
            <person name="Dobbs E."/>
            <person name="Dukaj L."/>
            <person name="Fan L."/>
            <person name="FitzGerald M.G."/>
            <person name="French C."/>
            <person name="Gujja S."/>
            <person name="Hansen K."/>
            <person name="Keifenheim D."/>
            <person name="Levin J.Z."/>
            <person name="Mosher R.A."/>
            <person name="Mueller C.A."/>
            <person name="Pfiffner J."/>
            <person name="Priest M."/>
            <person name="Russ C."/>
            <person name="Smialowska A."/>
            <person name="Swoboda P."/>
            <person name="Sykes S.M."/>
            <person name="Vaughn M."/>
            <person name="Vengrova S."/>
            <person name="Yoder R."/>
            <person name="Zeng Q."/>
            <person name="Allshire R."/>
            <person name="Baulcombe D."/>
            <person name="Birren B.W."/>
            <person name="Brown W."/>
            <person name="Ekwall K."/>
            <person name="Kellis M."/>
            <person name="Leatherwood J."/>
            <person name="Levin H."/>
            <person name="Margalit H."/>
            <person name="Martienssen R."/>
            <person name="Nieduszynski C.A."/>
            <person name="Spatafora J.W."/>
            <person name="Friedman N."/>
            <person name="Dalgaard J.Z."/>
            <person name="Baumann P."/>
            <person name="Niki H."/>
            <person name="Regev A."/>
            <person name="Nusbaum C."/>
        </authorList>
    </citation>
    <scope>REVISION OF GENE MODEL</scope>
</reference>
<reference key="3">
    <citation type="journal article" date="2008" name="J. Proteome Res.">
        <title>Phosphoproteome analysis of fission yeast.</title>
        <authorList>
            <person name="Wilson-Grady J.T."/>
            <person name="Villen J."/>
            <person name="Gygi S.P."/>
        </authorList>
    </citation>
    <scope>PHOSPHORYLATION [LARGE SCALE ANALYSIS] AT SER-200</scope>
    <scope>IDENTIFICATION BY MASS SPECTROMETRY</scope>
</reference>
<comment type="function">
    <text evidence="1">Involved in the biogenesis of peroxisomes.</text>
</comment>
<comment type="subcellular location">
    <subcellularLocation>
        <location>Peroxisome membrane</location>
        <topology>Peripheral membrane protein</topology>
        <orientation>Matrix side</orientation>
    </subcellularLocation>
</comment>
<comment type="similarity">
    <text evidence="3">Belongs to the peroxin-16 family.</text>
</comment>
<name>PEX16_SCHPO</name>
<organism>
    <name type="scientific">Schizosaccharomyces pombe (strain 972 / ATCC 24843)</name>
    <name type="common">Fission yeast</name>
    <dbReference type="NCBI Taxonomy" id="284812"/>
    <lineage>
        <taxon>Eukaryota</taxon>
        <taxon>Fungi</taxon>
        <taxon>Dikarya</taxon>
        <taxon>Ascomycota</taxon>
        <taxon>Taphrinomycotina</taxon>
        <taxon>Schizosaccharomycetes</taxon>
        <taxon>Schizosaccharomycetales</taxon>
        <taxon>Schizosaccharomycetaceae</taxon>
        <taxon>Schizosaccharomyces</taxon>
    </lineage>
</organism>